<reference key="1">
    <citation type="journal article" date="1999" name="Nucleic Acids Res.">
        <title>FBI-1, a factor that binds to the HIV-1 inducer of short transcripts (IST), is a POZ domain protein.</title>
        <authorList>
            <person name="Morrison D.J."/>
            <person name="Pendergrast P.S."/>
            <person name="Stavropoulos P."/>
            <person name="Colmenares S.U."/>
            <person name="Kobayashi R."/>
            <person name="Hernandez N."/>
        </authorList>
    </citation>
    <scope>NUCLEOTIDE SEQUENCE [MRNA]</scope>
    <scope>SUBUNIT</scope>
    <source>
        <tissue>Carcinoma</tissue>
    </source>
</reference>
<reference key="2">
    <citation type="submission" date="1997-04" db="EMBL/GenBank/DDBJ databases">
        <title>cDNA encoding TTF-I interacting peptide 21 (TIP21).</title>
        <authorList>
            <person name="Jansa P."/>
            <person name="Grummt I."/>
        </authorList>
    </citation>
    <scope>NUCLEOTIDE SEQUENCE [MRNA]</scope>
    <source>
        <tissue>Lung</tissue>
    </source>
</reference>
<reference key="3">
    <citation type="submission" date="2005-09" db="EMBL/GenBank/DDBJ databases">
        <authorList>
            <person name="Mural R.J."/>
            <person name="Istrail S."/>
            <person name="Sutton G.G."/>
            <person name="Florea L."/>
            <person name="Halpern A.L."/>
            <person name="Mobarry C.M."/>
            <person name="Lippert R."/>
            <person name="Walenz B."/>
            <person name="Shatkay H."/>
            <person name="Dew I."/>
            <person name="Miller J.R."/>
            <person name="Flanigan M.J."/>
            <person name="Edwards N.J."/>
            <person name="Bolanos R."/>
            <person name="Fasulo D."/>
            <person name="Halldorsson B.V."/>
            <person name="Hannenhalli S."/>
            <person name="Turner R."/>
            <person name="Yooseph S."/>
            <person name="Lu F."/>
            <person name="Nusskern D.R."/>
            <person name="Shue B.C."/>
            <person name="Zheng X.H."/>
            <person name="Zhong F."/>
            <person name="Delcher A.L."/>
            <person name="Huson D.H."/>
            <person name="Kravitz S.A."/>
            <person name="Mouchard L."/>
            <person name="Reinert K."/>
            <person name="Remington K.A."/>
            <person name="Clark A.G."/>
            <person name="Waterman M.S."/>
            <person name="Eichler E.E."/>
            <person name="Adams M.D."/>
            <person name="Hunkapiller M.W."/>
            <person name="Myers E.W."/>
            <person name="Venter J.C."/>
        </authorList>
    </citation>
    <scope>NUCLEOTIDE SEQUENCE [LARGE SCALE GENOMIC DNA]</scope>
</reference>
<reference key="4">
    <citation type="journal article" date="2004" name="Genome Res.">
        <title>The status, quality, and expansion of the NIH full-length cDNA project: the Mammalian Gene Collection (MGC).</title>
        <authorList>
            <consortium name="The MGC Project Team"/>
        </authorList>
    </citation>
    <scope>NUCLEOTIDE SEQUENCE [LARGE SCALE MRNA]</scope>
    <source>
        <tissue>Brain</tissue>
        <tissue>Pancreas</tissue>
    </source>
</reference>
<reference key="5">
    <citation type="journal article" date="1999" name="Oncogene">
        <title>Novel BTB/POZ domain zinc-finger protein, LRF, is a potential target of the LAZ-3/BCL-6 oncogene.</title>
        <authorList>
            <person name="Davies J.M."/>
            <person name="Hawe N."/>
            <person name="Kabarowski J."/>
            <person name="Huang Q.-H."/>
            <person name="Zhu J."/>
            <person name="Brand N.J."/>
            <person name="Leprince D."/>
            <person name="Dhordain P."/>
            <person name="Cook M."/>
            <person name="Moriss-Kay G."/>
            <person name="Zelent A."/>
        </authorList>
    </citation>
    <scope>TISSUE SPECIFICITY</scope>
</reference>
<reference key="6">
    <citation type="journal article" date="2002" name="J. Biol. Chem.">
        <title>POZ domain transcription factor, FBI-1, represses transcription of ADH5/FDH by interacting with the zinc finger and interfering with DNA binding activity of Sp1.</title>
        <authorList>
            <person name="Lee D.K."/>
            <person name="Suh D."/>
            <person name="Edenberg H.J."/>
            <person name="Hur M.W."/>
        </authorList>
    </citation>
    <scope>FUNCTION</scope>
    <scope>INTERACTION WITH SP1</scope>
    <scope>DOMAIN</scope>
</reference>
<reference key="7">
    <citation type="journal article" date="2004" name="J. Biol. Chem.">
        <title>Role of the POZ zinc finger transcription factor FBI-1 in human and murine adipogenesis.</title>
        <authorList>
            <person name="Laudes M."/>
            <person name="Christodoulides C."/>
            <person name="Sewter C."/>
            <person name="Rochford J.J."/>
            <person name="Considine R.V."/>
            <person name="Sethi J.K."/>
            <person name="Vidal-Puig A."/>
            <person name="O'Rahilly S."/>
        </authorList>
    </citation>
    <scope>FUNCTION</scope>
    <scope>TISSUE SPECIFICITY</scope>
    <scope>DEVELOPMENTAL STAGE</scope>
</reference>
<reference key="8">
    <citation type="journal article" date="2005" name="Nature">
        <title>Role of the proto-oncogene Pokemon in cellular transformation and ARF repression.</title>
        <authorList>
            <person name="Maeda T."/>
            <person name="Hobbs R.M."/>
            <person name="Merghoub T."/>
            <person name="Guernah I."/>
            <person name="Zelent A."/>
            <person name="Cordon-Cardo C."/>
            <person name="Teruya-Feldstein J."/>
            <person name="Pandolfi P.P."/>
        </authorList>
    </citation>
    <scope>TISSUE SPECIFICITY</scope>
</reference>
<reference key="9">
    <citation type="journal article" date="2006" name="Cell">
        <title>Global, in vivo, and site-specific phosphorylation dynamics in signaling networks.</title>
        <authorList>
            <person name="Olsen J.V."/>
            <person name="Blagoev B."/>
            <person name="Gnad F."/>
            <person name="Macek B."/>
            <person name="Kumar C."/>
            <person name="Mortensen P."/>
            <person name="Mann M."/>
        </authorList>
    </citation>
    <scope>PHOSPHORYLATION [LARGE SCALE ANALYSIS] AT SER-337 AND SER-549</scope>
    <scope>IDENTIFICATION BY MASS SPECTROMETRY [LARGE SCALE ANALYSIS]</scope>
    <source>
        <tissue>Cervix carcinoma</tissue>
    </source>
</reference>
<reference key="10">
    <citation type="journal article" date="2006" name="Nat. Biotechnol.">
        <title>A probability-based approach for high-throughput protein phosphorylation analysis and site localization.</title>
        <authorList>
            <person name="Beausoleil S.A."/>
            <person name="Villen J."/>
            <person name="Gerber S.A."/>
            <person name="Rush J."/>
            <person name="Gygi S.P."/>
        </authorList>
    </citation>
    <scope>IDENTIFICATION BY MASS SPECTROMETRY [LARGE SCALE ANALYSIS]</scope>
    <source>
        <tissue>Cervix carcinoma</tissue>
    </source>
</reference>
<reference key="11">
    <citation type="journal article" date="2007" name="Cell. Physiol. Biochem.">
        <title>Regulation of pokemon 1 activity by sumoylation.</title>
        <authorList>
            <person name="Roh H.E."/>
            <person name="Lee M.N."/>
            <person name="Jeon B.N."/>
            <person name="Choi W.I."/>
            <person name="Kim Y.J."/>
            <person name="Yu M.Y."/>
            <person name="Hur M.W."/>
        </authorList>
    </citation>
    <scope>FUNCTION</scope>
    <scope>SUBCELLULAR LOCATION</scope>
    <scope>SUMOYLATION</scope>
    <scope>MUTAGENESIS OF LYS-61; LYS-354; LYS-371; LYS-379; LYS-383; LYS-396; LYS-486; LYS-487; LYS-536 AND LYS-539</scope>
</reference>
<reference key="12">
    <citation type="journal article" date="2008" name="J. Proteome Res.">
        <title>Combining protein-based IMAC, peptide-based IMAC, and MudPIT for efficient phosphoproteomic analysis.</title>
        <authorList>
            <person name="Cantin G.T."/>
            <person name="Yi W."/>
            <person name="Lu B."/>
            <person name="Park S.K."/>
            <person name="Xu T."/>
            <person name="Lee J.-D."/>
            <person name="Yates J.R. III"/>
        </authorList>
    </citation>
    <scope>IDENTIFICATION BY MASS SPECTROMETRY [LARGE SCALE ANALYSIS]</scope>
    <source>
        <tissue>Cervix carcinoma</tissue>
    </source>
</reference>
<reference key="13">
    <citation type="journal article" date="2008" name="Proc. Natl. Acad. Sci. U.S.A.">
        <title>A quantitative atlas of mitotic phosphorylation.</title>
        <authorList>
            <person name="Dephoure N."/>
            <person name="Zhou C."/>
            <person name="Villen J."/>
            <person name="Beausoleil S.A."/>
            <person name="Bakalarski C.E."/>
            <person name="Elledge S.J."/>
            <person name="Gygi S.P."/>
        </authorList>
    </citation>
    <scope>PHOSPHORYLATION [LARGE SCALE ANALYSIS] AT SER-526</scope>
    <scope>IDENTIFICATION BY MASS SPECTROMETRY [LARGE SCALE ANALYSIS]</scope>
    <source>
        <tissue>Cervix carcinoma</tissue>
    </source>
</reference>
<reference key="14">
    <citation type="journal article" date="2009" name="Sci. Signal.">
        <title>Quantitative phosphoproteomic analysis of T cell receptor signaling reveals system-wide modulation of protein-protein interactions.</title>
        <authorList>
            <person name="Mayya V."/>
            <person name="Lundgren D.H."/>
            <person name="Hwang S.-I."/>
            <person name="Rezaul K."/>
            <person name="Wu L."/>
            <person name="Eng J.K."/>
            <person name="Rodionov V."/>
            <person name="Han D.K."/>
        </authorList>
    </citation>
    <scope>PHOSPHORYLATION [LARGE SCALE ANALYSIS] AT SER-511 AND SER-525</scope>
    <scope>IDENTIFICATION BY MASS SPECTROMETRY [LARGE SCALE ANALYSIS]</scope>
    <source>
        <tissue>Leukemic T-cell</tissue>
    </source>
</reference>
<reference key="15">
    <citation type="journal article" date="2010" name="Sci. Signal.">
        <title>Quantitative phosphoproteomics reveals widespread full phosphorylation site occupancy during mitosis.</title>
        <authorList>
            <person name="Olsen J.V."/>
            <person name="Vermeulen M."/>
            <person name="Santamaria A."/>
            <person name="Kumar C."/>
            <person name="Miller M.L."/>
            <person name="Jensen L.J."/>
            <person name="Gnad F."/>
            <person name="Cox J."/>
            <person name="Jensen T.S."/>
            <person name="Nigg E.A."/>
            <person name="Brunak S."/>
            <person name="Mann M."/>
        </authorList>
    </citation>
    <scope>PHOSPHORYLATION [LARGE SCALE ANALYSIS] AT SER-337; SER-341 AND SER-549</scope>
    <scope>IDENTIFICATION BY MASS SPECTROMETRY [LARGE SCALE ANALYSIS]</scope>
    <source>
        <tissue>Cervix carcinoma</tissue>
    </source>
</reference>
<reference key="16">
    <citation type="journal article" date="2011" name="Cell. Mol. Life Sci.">
        <title>FBI-1 functions as a novel AR co-repressor in prostate cancer cells.</title>
        <authorList>
            <person name="Cui J."/>
            <person name="Yang Y."/>
            <person name="Zhang C."/>
            <person name="Hu P."/>
            <person name="Kan W."/>
            <person name="Bai X."/>
            <person name="Liu X."/>
            <person name="Song H."/>
        </authorList>
    </citation>
    <scope>FUNCTION</scope>
    <scope>INTERACTION WITH AR; NCOR1 AND NCOR2</scope>
    <scope>DOMAIN</scope>
</reference>
<reference key="17">
    <citation type="journal article" date="2013" name="J. Proteome Res.">
        <title>Toward a comprehensive characterization of a human cancer cell phosphoproteome.</title>
        <authorList>
            <person name="Zhou H."/>
            <person name="Di Palma S."/>
            <person name="Preisinger C."/>
            <person name="Peng M."/>
            <person name="Polat A.N."/>
            <person name="Heck A.J."/>
            <person name="Mohammed S."/>
        </authorList>
    </citation>
    <scope>PHOSPHORYLATION [LARGE SCALE ANALYSIS] AT SER-337 AND SER-549</scope>
    <scope>IDENTIFICATION BY MASS SPECTROMETRY [LARGE SCALE ANALYSIS]</scope>
    <source>
        <tissue>Cervix carcinoma</tissue>
        <tissue>Erythroleukemia</tissue>
    </source>
</reference>
<reference key="18">
    <citation type="journal article" date="2014" name="EMBO Rep.">
        <title>The transcription factor FBI-1 inhibits SAM68-mediated BCL-X alternative splicing and apoptosis.</title>
        <authorList>
            <person name="Bielli P."/>
            <person name="Busa R."/>
            <person name="Di Stasi S.M."/>
            <person name="Munoz M.J."/>
            <person name="Botti F."/>
            <person name="Kornblihtt A.R."/>
            <person name="Sette C."/>
        </authorList>
    </citation>
    <scope>FUNCTION</scope>
    <scope>INTERACTION WITH KHDRBS1</scope>
    <scope>SUBCELLULAR LOCATION</scope>
    <scope>REGION</scope>
</reference>
<reference key="19">
    <citation type="journal article" date="2014" name="J. Proteomics">
        <title>An enzyme assisted RP-RPLC approach for in-depth analysis of human liver phosphoproteome.</title>
        <authorList>
            <person name="Bian Y."/>
            <person name="Song C."/>
            <person name="Cheng K."/>
            <person name="Dong M."/>
            <person name="Wang F."/>
            <person name="Huang J."/>
            <person name="Sun D."/>
            <person name="Wang L."/>
            <person name="Ye M."/>
            <person name="Zou H."/>
        </authorList>
    </citation>
    <scope>PHOSPHORYLATION [LARGE SCALE ANALYSIS] AT SER-337 AND SER-549</scope>
    <scope>IDENTIFICATION BY MASS SPECTROMETRY [LARGE SCALE ANALYSIS]</scope>
    <source>
        <tissue>Liver</tissue>
    </source>
</reference>
<reference key="20">
    <citation type="journal article" date="2014" name="Nat. Struct. Mol. Biol.">
        <title>Uncovering global SUMOylation signaling networks in a site-specific manner.</title>
        <authorList>
            <person name="Hendriks I.A."/>
            <person name="D'Souza R.C."/>
            <person name="Yang B."/>
            <person name="Verlaan-de Vries M."/>
            <person name="Mann M."/>
            <person name="Vertegaal A.C."/>
        </authorList>
    </citation>
    <scope>SUMOYLATION [LARGE SCALE ANALYSIS] AT LYS-539</scope>
    <scope>IDENTIFICATION BY MASS SPECTROMETRY [LARGE SCALE ANALYSIS]</scope>
</reference>
<reference key="21">
    <citation type="journal article" date="2014" name="Proc. Natl. Acad. Sci. U.S.A.">
        <title>Mapping of SUMO sites and analysis of SUMOylation changes induced by external stimuli.</title>
        <authorList>
            <person name="Impens F."/>
            <person name="Radoshevich L."/>
            <person name="Cossart P."/>
            <person name="Ribet D."/>
        </authorList>
    </citation>
    <scope>SUMOYLATION [LARGE SCALE ANALYSIS] AT LYS-539</scope>
    <scope>IDENTIFICATION BY MASS SPECTROMETRY [LARGE SCALE ANALYSIS]</scope>
</reference>
<reference key="22">
    <citation type="journal article" date="2015" name="Biochim. Biophys. Acta">
        <title>Pokemon (FBI-1) interacts with Smad4 to repress TGF-beta-induced transcriptional responses.</title>
        <authorList>
            <person name="Yang Y."/>
            <person name="Cui J."/>
            <person name="Xue F."/>
            <person name="Zhang C."/>
            <person name="Mei Z."/>
            <person name="Wang Y."/>
            <person name="Bi M."/>
            <person name="Shan D."/>
            <person name="Meredith A."/>
            <person name="Li H."/>
            <person name="Xu Z.Q."/>
        </authorList>
    </citation>
    <scope>FUNCTION</scope>
    <scope>INTERACTION WITH HDAC1 AND SMAD4</scope>
    <scope>DOMAIN</scope>
    <scope>REGION</scope>
</reference>
<reference key="23">
    <citation type="journal article" date="2015" name="Nat. Commun.">
        <title>LRF maintains genome integrity by regulating the non-homologous end joining pathway of DNA repair.</title>
        <authorList>
            <person name="Liu X.S."/>
            <person name="Chandramouly G."/>
            <person name="Rass E."/>
            <person name="Guan Y."/>
            <person name="Wang G."/>
            <person name="Hobbs R.M."/>
            <person name="Rajendran A."/>
            <person name="Xie A."/>
            <person name="Shah J.V."/>
            <person name="Davis A.J."/>
            <person name="Scully R."/>
            <person name="Lunardi A."/>
            <person name="Pandolfi P.P."/>
        </authorList>
    </citation>
    <scope>INTERACTION WITH THE DNA-DEPENDENT PROTEIN KINASE COMPLEX</scope>
</reference>
<reference key="24">
    <citation type="journal article" date="2016" name="Oncogene">
        <title>Somatic human ZBTB7A zinc finger mutations promote cancer progression.</title>
        <authorList>
            <person name="Liu X.S."/>
            <person name="Liu Z."/>
            <person name="Gerarduzzi C."/>
            <person name="Choi D.E."/>
            <person name="Ganapathy S."/>
            <person name="Pandolfi P.P."/>
            <person name="Yuan Z.M."/>
        </authorList>
    </citation>
    <scope>FUNCTION</scope>
    <scope>MUTAGENESIS OF PRO-14; SER-22; ARG-49; LYS-60; ASP-78; ARG-112; PRO-184; GLN-322; SER-326; SER-357; ARG-377; CYS-387; ILE-391; ARG-399; ARG-402; THR-403; HIS-404; GLY-406; PRO-409; CYS-412; LYS-424; ARG-430; THR-461; LEU-463; TYR-466; ALA-522; GLU-541; GLY-562 AND ASP-576</scope>
</reference>
<reference key="25">
    <citation type="journal article" date="2016" name="Science">
        <title>Transcription factors LRF and BCL11A independently repress expression of fetal hemoglobin.</title>
        <authorList>
            <person name="Masuda T."/>
            <person name="Wang X."/>
            <person name="Maeda M."/>
            <person name="Canver M.C."/>
            <person name="Sher F."/>
            <person name="Funnell A.P."/>
            <person name="Fisher C."/>
            <person name="Suciu M."/>
            <person name="Martyn G.E."/>
            <person name="Norton L.J."/>
            <person name="Zhu C."/>
            <person name="Kurita R."/>
            <person name="Nakamura Y."/>
            <person name="Xu J."/>
            <person name="Higgs D.R."/>
            <person name="Crossley M."/>
            <person name="Bauer D.E."/>
            <person name="Orkin S.H."/>
            <person name="Kharchenko P.V."/>
            <person name="Maeda T."/>
        </authorList>
    </citation>
    <scope>FUNCTION</scope>
    <scope>DEVELOPMENTAL STAGE</scope>
</reference>
<reference key="26">
    <citation type="journal article" date="2017" name="Nat. Struct. Mol. Biol.">
        <title>Site-specific mapping of the human SUMO proteome reveals co-modification with phosphorylation.</title>
        <authorList>
            <person name="Hendriks I.A."/>
            <person name="Lyon D."/>
            <person name="Young C."/>
            <person name="Jensen L.J."/>
            <person name="Vertegaal A.C."/>
            <person name="Nielsen M.L."/>
        </authorList>
    </citation>
    <scope>SUMOYLATION [LARGE SCALE ANALYSIS] AT LYS-436 AND LYS-539</scope>
    <scope>IDENTIFICATION BY MASS SPECTROMETRY [LARGE SCALE ANALYSIS]</scope>
</reference>
<reference key="27">
    <citation type="journal article" date="2018" name="PLoS Biol.">
        <title>Zbtb7a is a transducer for the control of promoter accessibility by NF-kappa B and multiple other transcription factors.</title>
        <authorList>
            <person name="Ramos Pittol J.M."/>
            <person name="Oruba A."/>
            <person name="Mittler G."/>
            <person name="Saccani S."/>
            <person name="van Essen D."/>
        </authorList>
    </citation>
    <scope>INTERACTION WITH RELA</scope>
</reference>
<reference key="28">
    <citation type="journal article" date="2006" name="Biochem. Biophys. Res. Commun.">
        <title>Structure of the POZ domain of human LRF, a master regulator of oncogenesis.</title>
        <authorList>
            <person name="Schubot F.D."/>
            <person name="Tropea J.E."/>
            <person name="Waugh D.S."/>
        </authorList>
    </citation>
    <scope>X-RAY CRYSTALLOGRAPHY (2.0 ANGSTROMS) OF 9-128</scope>
</reference>
<reference key="29">
    <citation type="journal article" date="2007" name="Protein Sci.">
        <title>Crystal structure of the BTB domain from the LRF/ZBTB7 transcriptional regulator.</title>
        <authorList>
            <person name="Stogios P.J."/>
            <person name="Chen L."/>
            <person name="Prive G.G."/>
        </authorList>
    </citation>
    <scope>X-RAY CRYSTALLOGRAPHY (2.1 ANGSTROMS) OF 1-131</scope>
</reference>
<reference key="30">
    <citation type="journal article" date="2020" name="J. Hum. Genet.">
        <title>De novo ZBTB7A variant in a patient with macrocephaly, intellectual disability, and sleep apnea: implications for the phenotypic development in 19p13.3 microdeletions.</title>
        <authorList>
            <person name="Ohishi A."/>
            <person name="Masunaga Y."/>
            <person name="Iijima S."/>
            <person name="Yamoto K."/>
            <person name="Kato F."/>
            <person name="Fukami M."/>
            <person name="Saitsu H."/>
            <person name="Ogata T."/>
        </authorList>
    </citation>
    <scope>VARIANT MNDLFH TRP-384</scope>
    <scope>INVOLVEMENT IN MNDLFH</scope>
</reference>
<reference key="31">
    <citation type="journal article" date="2022" name="Am. J. Med. Genet. A">
        <title>Heterozygous variants in ZBTB7A cause a neurodevelopmental disorder associated with symptomatic overgrowth of pharyngeal lymphoid tissue, macrocephaly, and elevated fetal hemoglobin.</title>
        <authorList>
            <person name="von der Lippe C."/>
            <person name="Tveten K."/>
            <person name="Prescott T.E."/>
            <person name="Holla O.L."/>
            <person name="Busk O.L."/>
            <person name="Burke K.B."/>
            <person name="Sansbury F.H."/>
            <person name="Baptista J."/>
            <person name="Fry A.E."/>
            <person name="Lim D."/>
            <person name="Jolles S."/>
            <person name="Evans J."/>
            <person name="Osio D."/>
            <person name="Macmillan C."/>
            <person name="Bruno I."/>
            <person name="Faletra F."/>
            <person name="Climent S."/>
            <person name="Urreitzi R."/>
            <person name="Hoenicka J."/>
            <person name="Palau F."/>
            <person name="Cohen A.S.A."/>
            <person name="Engleman K."/>
            <person name="Zhou D."/>
            <person name="Amudhavalli S.M."/>
            <person name="Jeanne M."/>
            <person name="Bonnet-Brilhault F."/>
            <person name="Levy J."/>
            <person name="Drunat S."/>
            <person name="Derive N."/>
            <person name="Haug M.G."/>
            <person name="Thorstensen W.M."/>
        </authorList>
    </citation>
    <scope>VARIANTS MNDLFH ILE-56; 278-GLU--ALA-584 DEL; 370-GLN--ALA-584 DEL; LYS-405 AND ASN-452</scope>
    <scope>INVOLVEMENT IN MNDLFH</scope>
</reference>
<accession>O95365</accession>
<accession>D6W619</accession>
<accession>O00456</accession>
<accession>Q14D41</accession>
<accession>Q5XG86</accession>
<proteinExistence type="evidence at protein level"/>
<name>ZBT7A_HUMAN</name>
<feature type="chain" id="PRO_0000047715" description="Zinc finger and BTB domain-containing protein 7A">
    <location>
        <begin position="1"/>
        <end position="584"/>
    </location>
</feature>
<feature type="domain" description="BTB" evidence="3">
    <location>
        <begin position="34"/>
        <end position="101"/>
    </location>
</feature>
<feature type="zinc finger region" description="C2H2-type 1" evidence="4">
    <location>
        <begin position="382"/>
        <end position="404"/>
    </location>
</feature>
<feature type="zinc finger region" description="C2H2-type 2" evidence="4">
    <location>
        <begin position="410"/>
        <end position="432"/>
    </location>
</feature>
<feature type="zinc finger region" description="C2H2-type 3" evidence="4">
    <location>
        <begin position="438"/>
        <end position="460"/>
    </location>
</feature>
<feature type="zinc finger region" description="C2H2-type 4; atypical" evidence="4">
    <location>
        <begin position="466"/>
        <end position="490"/>
    </location>
</feature>
<feature type="region of interest" description="Disordered" evidence="5">
    <location>
        <begin position="220"/>
        <end position="313"/>
    </location>
</feature>
<feature type="region of interest" description="Mediates interaction with KHDRBS1" evidence="11">
    <location>
        <begin position="277"/>
        <end position="584"/>
    </location>
</feature>
<feature type="region of interest" description="Mediates interaction with RELA" evidence="1">
    <location>
        <begin position="349"/>
        <end position="584"/>
    </location>
</feature>
<feature type="region of interest" description="Mediates interaction with SMAD4" evidence="12">
    <location>
        <begin position="377"/>
        <end position="584"/>
    </location>
</feature>
<feature type="region of interest" description="Disordered" evidence="5">
    <location>
        <begin position="486"/>
        <end position="584"/>
    </location>
</feature>
<feature type="compositionally biased region" description="Low complexity" evidence="5">
    <location>
        <begin position="281"/>
        <end position="290"/>
    </location>
</feature>
<feature type="compositionally biased region" description="Low complexity" evidence="5">
    <location>
        <begin position="505"/>
        <end position="527"/>
    </location>
</feature>
<feature type="compositionally biased region" description="Basic and acidic residues" evidence="5">
    <location>
        <begin position="528"/>
        <end position="540"/>
    </location>
</feature>
<feature type="compositionally biased region" description="Gly residues" evidence="5">
    <location>
        <begin position="560"/>
        <end position="572"/>
    </location>
</feature>
<feature type="modified residue" description="Phosphoserine" evidence="28 31 32 33">
    <location>
        <position position="337"/>
    </location>
</feature>
<feature type="modified residue" description="Phosphoserine" evidence="31">
    <location>
        <position position="341"/>
    </location>
</feature>
<feature type="modified residue" description="Phosphoserine" evidence="30">
    <location>
        <position position="511"/>
    </location>
</feature>
<feature type="modified residue" description="Phosphoserine" evidence="30">
    <location>
        <position position="525"/>
    </location>
</feature>
<feature type="modified residue" description="Phosphoserine" evidence="29">
    <location>
        <position position="526"/>
    </location>
</feature>
<feature type="modified residue" description="Phosphoserine" evidence="28 31 32 33">
    <location>
        <position position="549"/>
    </location>
</feature>
<feature type="cross-link" description="Glycyl lysine isopeptide (Lys-Gly) (interchain with G-Cter in SUMO2)" evidence="36">
    <location>
        <position position="436"/>
    </location>
</feature>
<feature type="cross-link" description="Glycyl lysine isopeptide (Lys-Gly) (interchain with G-Cter in SUMO2)" evidence="34 35 36">
    <location>
        <position position="539"/>
    </location>
</feature>
<feature type="sequence variant" id="VAR_086968" description="In MNDLFH; uncertain significance." evidence="18">
    <original>S</original>
    <variation>I</variation>
    <location>
        <position position="56"/>
    </location>
</feature>
<feature type="sequence variant" id="VAR_086969" description="In MNDLFH." evidence="18">
    <location>
        <begin position="278"/>
        <end position="584"/>
    </location>
</feature>
<feature type="sequence variant" id="VAR_086970" description="In MNDLFH." evidence="18">
    <location>
        <begin position="370"/>
        <end position="584"/>
    </location>
</feature>
<feature type="sequence variant" id="VAR_086971" description="In MNDLFH." evidence="17">
    <original>C</original>
    <variation>W</variation>
    <location>
        <position position="384"/>
    </location>
</feature>
<feature type="sequence variant" id="VAR_086972" description="In MNDLFH." evidence="18">
    <original>T</original>
    <variation>K</variation>
    <location>
        <position position="405"/>
    </location>
</feature>
<feature type="sequence variant" id="VAR_086973" description="In MNDLFH; uncertain significance." evidence="18">
    <original>D</original>
    <variation>N</variation>
    <location>
        <position position="452"/>
    </location>
</feature>
<feature type="mutagenesis site" description="No effect on transcription repressor activity. No effect on nuclear localization." evidence="14">
    <original>P</original>
    <variation>S</variation>
    <location>
        <position position="14"/>
    </location>
</feature>
<feature type="mutagenesis site" description="No effect on transcription repressor activity. No effect on nuclear localization." evidence="14">
    <original>S</original>
    <variation>R</variation>
    <location>
        <position position="22"/>
    </location>
</feature>
<feature type="mutagenesis site" description="Increased proteasomal degradation. No effect on nuclear localization." evidence="14">
    <original>R</original>
    <variation>H</variation>
    <location>
        <position position="49"/>
    </location>
</feature>
<feature type="mutagenesis site" description="No effect on transcription repressor activity. No effect on nuclear localization." evidence="14">
    <original>K</original>
    <variation>R</variation>
    <location>
        <position position="60"/>
    </location>
</feature>
<feature type="mutagenesis site" description="Loss of sumoylation with SUMO1. May decrease interaction with transcriptional corepressors." evidence="9">
    <original>K</original>
    <variation>R</variation>
    <location>
        <position position="61"/>
    </location>
</feature>
<feature type="mutagenesis site" description="No effect on transcription repressor activity. No effect on nuclear localization." evidence="14">
    <original>D</original>
    <variation>E</variation>
    <location>
        <position position="78"/>
    </location>
</feature>
<feature type="mutagenesis site" description="No effect on transcription repressor activity. No effect on nuclear localization." evidence="14">
    <original>R</original>
    <variation>C</variation>
    <location>
        <position position="112"/>
    </location>
</feature>
<feature type="mutagenesis site" description="Decreased transcription repressor activity. No effect on nuclear localization." evidence="14">
    <original>P</original>
    <variation>S</variation>
    <location>
        <position position="184"/>
    </location>
</feature>
<feature type="mutagenesis site" description="Decreased transcription repressor activity. No effect on nuclear localization." evidence="14">
    <original>Q</original>
    <variation>L</variation>
    <location>
        <position position="322"/>
    </location>
</feature>
<feature type="mutagenesis site" description="No effect on transcription repressor activity. No effect on nuclear localization." evidence="14">
    <original>S</original>
    <variation>R</variation>
    <location>
        <position position="326"/>
    </location>
</feature>
<feature type="mutagenesis site" description="No effect on sumoylation with SUMO1. No effect on promoter binding." evidence="9">
    <original>K</original>
    <variation>R</variation>
    <location>
        <position position="354"/>
    </location>
</feature>
<feature type="mutagenesis site" description="No effect on transcription repressor activity. No effect on nuclear localization." evidence="14">
    <original>S</original>
    <variation>R</variation>
    <location>
        <position position="357"/>
    </location>
</feature>
<feature type="mutagenesis site" description="No effect on sumoylation with SUMO1. No effect on promoter binding." evidence="9">
    <original>K</original>
    <variation>R</variation>
    <location>
        <position position="371"/>
    </location>
</feature>
<feature type="mutagenesis site" description="No effect on transcription repressor activity. No effect on nuclear localization." evidence="14">
    <original>R</original>
    <variation>L</variation>
    <location>
        <position position="377"/>
    </location>
</feature>
<feature type="mutagenesis site" description="No effect on sumoylation with SUMO1. Decreased transcription repression activity. No effect on promoter binding." evidence="9">
    <original>K</original>
    <variation>R</variation>
    <location>
        <position position="379"/>
    </location>
</feature>
<feature type="mutagenesis site" description="No effect on sumoylation with SUMO1. No effect on promoter binding." evidence="9">
    <original>K</original>
    <variation>R</variation>
    <location>
        <position position="383"/>
    </location>
</feature>
<feature type="mutagenesis site" description="Decreased transcription repressor activity. No effect on nuclear localization." evidence="14">
    <original>C</original>
    <variation>F</variation>
    <location>
        <position position="387"/>
    </location>
</feature>
<feature type="mutagenesis site" description="No effect on transcription repressor activity. No effect on nuclear localization." evidence="14">
    <original>I</original>
    <variation>L</variation>
    <location>
        <position position="391"/>
    </location>
</feature>
<feature type="mutagenesis site" description="No effect on sumoylation with SUMO1. Decreased transcription repression activity. No effect on promoter binding." evidence="9">
    <original>K</original>
    <variation>R</variation>
    <location>
        <position position="396"/>
    </location>
</feature>
<feature type="mutagenesis site" description="Decreased transcription repressor activity, dominant negative effect. Increased glycolysis and cell proliferation, dominant negative effect. No effect on nuclear localization." evidence="14">
    <original>R</original>
    <variation>L</variation>
    <location>
        <position position="399"/>
    </location>
</feature>
<feature type="mutagenesis site" description="Decreased transcription repressor activity. Acts as a dominant negative. No effect on nuclear localization." evidence="14">
    <original>R</original>
    <variation>H</variation>
    <location>
        <position position="402"/>
    </location>
</feature>
<feature type="mutagenesis site" description="Decreased transcription repressor activity. No effect on nuclear localization." evidence="14">
    <original>T</original>
    <variation>N</variation>
    <location>
        <position position="403"/>
    </location>
</feature>
<feature type="mutagenesis site" description="Decreased transcription repressor activity. Acts as a dominant negative. No effect on nuclear localization." evidence="14">
    <original>H</original>
    <variation>R</variation>
    <location>
        <position position="404"/>
    </location>
</feature>
<feature type="mutagenesis site" description="Decreased transcription repressor activity. No effect on nuclear localization." evidence="14">
    <original>G</original>
    <variation>V</variation>
    <location>
        <position position="406"/>
    </location>
</feature>
<feature type="mutagenesis site" description="Decreased transcription repressor activity. No effect on nuclear localization." evidence="14">
    <original>P</original>
    <variation>S</variation>
    <location>
        <position position="409"/>
    </location>
</feature>
<feature type="mutagenesis site" description="Decreased transcription repressor activity. No effect on nuclear localization." evidence="14">
    <original>C</original>
    <variation>Y</variation>
    <location>
        <position position="412"/>
    </location>
</feature>
<feature type="mutagenesis site" description="Decreased transcription repressor activity. No effect on nuclear localization." evidence="14">
    <original>K</original>
    <variation>N</variation>
    <location>
        <position position="424"/>
    </location>
</feature>
<feature type="mutagenesis site" description="No effect on transcription repressor activity. No effect on nuclear localization." evidence="14">
    <original>K</original>
    <variation>T</variation>
    <location>
        <position position="424"/>
    </location>
</feature>
<feature type="mutagenesis site" description="Decreased transcription repressor activity. No effect on nuclear localization." evidence="14">
    <original>R</original>
    <variation>W</variation>
    <location>
        <position position="430"/>
    </location>
</feature>
<feature type="mutagenesis site" description="No effect on transcription repressor activity. No effect on nuclear localization." evidence="14">
    <original>T</original>
    <variation>M</variation>
    <location>
        <position position="461"/>
    </location>
</feature>
<feature type="mutagenesis site" description="No effect on transcription repressor activity. No effect on nuclear localization." evidence="14">
    <original>L</original>
    <variation>M</variation>
    <location>
        <position position="463"/>
    </location>
</feature>
<feature type="mutagenesis site" description="Decreased transcription repressor activity. No effect on nuclear localization." evidence="14">
    <original>Y</original>
    <variation>D</variation>
    <location>
        <position position="466"/>
    </location>
</feature>
<feature type="mutagenesis site" description="No effect on sumoylation with SUMO1. No effect on promoter binding. No effect on nuclear localization." evidence="9">
    <original>K</original>
    <variation>R</variation>
    <location>
        <position position="486"/>
    </location>
</feature>
<feature type="mutagenesis site" description="No effect on sumoylation with SUMO1. No effect on promoter binding. No effect on nuclear localization." evidence="9">
    <original>K</original>
    <variation>R</variation>
    <location>
        <position position="487"/>
    </location>
</feature>
<feature type="mutagenesis site" description="No effect on transcription repressor activity. No effect on nuclear localization." evidence="14">
    <original>A</original>
    <variation>T</variation>
    <location>
        <position position="522"/>
    </location>
</feature>
<feature type="mutagenesis site" description="No effect on sumoylation with SUMO1. Decreased transcription repression activity. No effect on promoter binding." evidence="9">
    <original>K</original>
    <variation>R</variation>
    <location>
        <position position="536"/>
    </location>
</feature>
<feature type="mutagenesis site" description="No effect on sumoylation with SUMO1. Decreased transcription repression activity. No effect on promoter binding." evidence="9">
    <original>K</original>
    <variation>R</variation>
    <location>
        <position position="539"/>
    </location>
</feature>
<feature type="mutagenesis site" description="No effect on transcription repressor activity. No effect on nuclear localization." evidence="14">
    <original>E</original>
    <variation>K</variation>
    <location>
        <position position="541"/>
    </location>
</feature>
<feature type="mutagenesis site" description="No effect on transcription repressor activity. No effect on nuclear localization." evidence="14">
    <original>G</original>
    <variation>D</variation>
    <location>
        <position position="562"/>
    </location>
</feature>
<feature type="mutagenesis site" description="No effect on transcription repressor activity. No effect on nuclear localization." evidence="14">
    <original>D</original>
    <variation>V</variation>
    <location>
        <position position="576"/>
    </location>
</feature>
<feature type="sequence conflict" description="In Ref. 4; AAH84568." evidence="25" ref="4">
    <original>G</original>
    <variation>C</variation>
    <location>
        <position position="554"/>
    </location>
</feature>
<feature type="strand" evidence="38">
    <location>
        <begin position="9"/>
        <end position="12"/>
    </location>
</feature>
<feature type="helix" evidence="37">
    <location>
        <begin position="16"/>
        <end position="29"/>
    </location>
</feature>
<feature type="strand" evidence="37">
    <location>
        <begin position="36"/>
        <end position="40"/>
    </location>
</feature>
<feature type="strand" evidence="37">
    <location>
        <begin position="43"/>
        <end position="47"/>
    </location>
</feature>
<feature type="helix" evidence="37">
    <location>
        <begin position="49"/>
        <end position="55"/>
    </location>
</feature>
<feature type="helix" evidence="37">
    <location>
        <begin position="57"/>
        <end position="64"/>
    </location>
</feature>
<feature type="strand" evidence="37">
    <location>
        <begin position="73"/>
        <end position="76"/>
    </location>
</feature>
<feature type="helix" evidence="37">
    <location>
        <begin position="82"/>
        <end position="94"/>
    </location>
</feature>
<feature type="strand" evidence="38">
    <location>
        <begin position="95"/>
        <end position="99"/>
    </location>
</feature>
<feature type="helix" evidence="37">
    <location>
        <begin position="101"/>
        <end position="103"/>
    </location>
</feature>
<feature type="helix" evidence="37">
    <location>
        <begin position="104"/>
        <end position="113"/>
    </location>
</feature>
<feature type="helix" evidence="37">
    <location>
        <begin position="117"/>
        <end position="127"/>
    </location>
</feature>
<feature type="strand" evidence="42">
    <location>
        <begin position="381"/>
        <end position="383"/>
    </location>
</feature>
<feature type="turn" evidence="43">
    <location>
        <begin position="385"/>
        <end position="387"/>
    </location>
</feature>
<feature type="strand" evidence="43">
    <location>
        <begin position="390"/>
        <end position="393"/>
    </location>
</feature>
<feature type="helix" evidence="40">
    <location>
        <begin position="394"/>
        <end position="396"/>
    </location>
</feature>
<feature type="helix" evidence="43">
    <location>
        <begin position="397"/>
        <end position="405"/>
    </location>
</feature>
<feature type="turn" evidence="43">
    <location>
        <begin position="413"/>
        <end position="415"/>
    </location>
</feature>
<feature type="strand" evidence="43">
    <location>
        <begin position="418"/>
        <end position="420"/>
    </location>
</feature>
<feature type="helix" evidence="43">
    <location>
        <begin position="422"/>
        <end position="428"/>
    </location>
</feature>
<feature type="helix" evidence="43">
    <location>
        <begin position="430"/>
        <end position="433"/>
    </location>
</feature>
<feature type="turn" evidence="43">
    <location>
        <begin position="441"/>
        <end position="443"/>
    </location>
</feature>
<feature type="strand" evidence="43">
    <location>
        <begin position="446"/>
        <end position="449"/>
    </location>
</feature>
<feature type="helix" evidence="43">
    <location>
        <begin position="450"/>
        <end position="456"/>
    </location>
</feature>
<feature type="helix" evidence="43">
    <location>
        <begin position="457"/>
        <end position="459"/>
    </location>
</feature>
<feature type="turn" evidence="41">
    <location>
        <begin position="461"/>
        <end position="463"/>
    </location>
</feature>
<feature type="strand" evidence="41">
    <location>
        <begin position="466"/>
        <end position="468"/>
    </location>
</feature>
<feature type="turn" evidence="39">
    <location>
        <begin position="469"/>
        <end position="471"/>
    </location>
</feature>
<feature type="strand" evidence="39">
    <location>
        <begin position="474"/>
        <end position="477"/>
    </location>
</feature>
<feature type="helix" evidence="39">
    <location>
        <begin position="478"/>
        <end position="486"/>
    </location>
</feature>
<feature type="helix" evidence="41">
    <location>
        <begin position="488"/>
        <end position="490"/>
    </location>
</feature>
<dbReference type="EMBL" id="AF097916">
    <property type="protein sequence ID" value="AAC72973.1"/>
    <property type="molecule type" value="mRNA"/>
</dbReference>
<dbReference type="EMBL" id="AF000561">
    <property type="protein sequence ID" value="AAB58414.1"/>
    <property type="status" value="ALT_FRAME"/>
    <property type="molecule type" value="mRNA"/>
</dbReference>
<dbReference type="EMBL" id="CH471139">
    <property type="protein sequence ID" value="EAW69267.1"/>
    <property type="molecule type" value="Genomic_DNA"/>
</dbReference>
<dbReference type="EMBL" id="CH471139">
    <property type="protein sequence ID" value="EAW69268.1"/>
    <property type="molecule type" value="Genomic_DNA"/>
</dbReference>
<dbReference type="EMBL" id="CH471139">
    <property type="protein sequence ID" value="EAW69270.1"/>
    <property type="molecule type" value="Genomic_DNA"/>
</dbReference>
<dbReference type="EMBL" id="CH471139">
    <property type="protein sequence ID" value="EAW69271.1"/>
    <property type="molecule type" value="Genomic_DNA"/>
</dbReference>
<dbReference type="EMBL" id="CH471139">
    <property type="protein sequence ID" value="EAW69272.1"/>
    <property type="molecule type" value="Genomic_DNA"/>
</dbReference>
<dbReference type="EMBL" id="BC084568">
    <property type="protein sequence ID" value="AAH84568.1"/>
    <property type="molecule type" value="mRNA"/>
</dbReference>
<dbReference type="EMBL" id="BC113511">
    <property type="protein sequence ID" value="AAI13512.1"/>
    <property type="molecule type" value="mRNA"/>
</dbReference>
<dbReference type="CCDS" id="CCDS12119.1"/>
<dbReference type="RefSeq" id="NP_001304919.1">
    <property type="nucleotide sequence ID" value="NM_001317990.2"/>
</dbReference>
<dbReference type="RefSeq" id="NP_056982.1">
    <property type="nucleotide sequence ID" value="NM_015898.4"/>
</dbReference>
<dbReference type="RefSeq" id="XP_005259628.1">
    <property type="nucleotide sequence ID" value="XM_005259571.5"/>
</dbReference>
<dbReference type="RefSeq" id="XP_054177151.1">
    <property type="nucleotide sequence ID" value="XM_054321176.1"/>
</dbReference>
<dbReference type="PDB" id="2IF5">
    <property type="method" value="X-ray"/>
    <property type="resolution" value="2.00 A"/>
    <property type="chains" value="A=9-128"/>
</dbReference>
<dbReference type="PDB" id="2NN2">
    <property type="method" value="X-ray"/>
    <property type="resolution" value="2.10 A"/>
    <property type="chains" value="A/B=1-131"/>
</dbReference>
<dbReference type="PDB" id="7EYI">
    <property type="method" value="X-ray"/>
    <property type="resolution" value="2.40 A"/>
    <property type="chains" value="G/H=382-506"/>
</dbReference>
<dbReference type="PDB" id="7N5S">
    <property type="method" value="X-ray"/>
    <property type="resolution" value="2.86 A"/>
    <property type="chains" value="A=369-500"/>
</dbReference>
<dbReference type="PDB" id="7N5T">
    <property type="method" value="X-ray"/>
    <property type="resolution" value="2.90 A"/>
    <property type="chains" value="A=369-500"/>
</dbReference>
<dbReference type="PDB" id="7N5U">
    <property type="method" value="X-ray"/>
    <property type="resolution" value="2.86 A"/>
    <property type="chains" value="A=369-500"/>
</dbReference>
<dbReference type="PDB" id="7N5V">
    <property type="method" value="X-ray"/>
    <property type="resolution" value="3.08 A"/>
    <property type="chains" value="A/B/F=369-500"/>
</dbReference>
<dbReference type="PDB" id="7N5W">
    <property type="method" value="X-ray"/>
    <property type="resolution" value="2.24 A"/>
    <property type="chains" value="A=380-500"/>
</dbReference>
<dbReference type="PDB" id="8E3D">
    <property type="method" value="X-ray"/>
    <property type="resolution" value="2.62 A"/>
    <property type="chains" value="A/B/F=380-500"/>
</dbReference>
<dbReference type="PDB" id="8E3E">
    <property type="method" value="X-ray"/>
    <property type="resolution" value="2.99 A"/>
    <property type="chains" value="A/B/F=341-505"/>
</dbReference>
<dbReference type="PDB" id="8H9H">
    <property type="method" value="X-ray"/>
    <property type="resolution" value="2.20 A"/>
    <property type="chains" value="F/G=382-464"/>
</dbReference>
<dbReference type="PDBsum" id="2IF5"/>
<dbReference type="PDBsum" id="2NN2"/>
<dbReference type="PDBsum" id="7EYI"/>
<dbReference type="PDBsum" id="7N5S"/>
<dbReference type="PDBsum" id="7N5T"/>
<dbReference type="PDBsum" id="7N5U"/>
<dbReference type="PDBsum" id="7N5V"/>
<dbReference type="PDBsum" id="7N5W"/>
<dbReference type="PDBsum" id="8E3D"/>
<dbReference type="PDBsum" id="8E3E"/>
<dbReference type="PDBsum" id="8H9H"/>
<dbReference type="SMR" id="O95365"/>
<dbReference type="BioGRID" id="119488">
    <property type="interactions" value="133"/>
</dbReference>
<dbReference type="DIP" id="DIP-56307N"/>
<dbReference type="FunCoup" id="O95365">
    <property type="interactions" value="1420"/>
</dbReference>
<dbReference type="IntAct" id="O95365">
    <property type="interactions" value="21"/>
</dbReference>
<dbReference type="MINT" id="O95365"/>
<dbReference type="STRING" id="9606.ENSP00000323670"/>
<dbReference type="ChEMBL" id="CHEMBL5069375"/>
<dbReference type="GlyGen" id="O95365">
    <property type="glycosylation" value="3 sites, 1 O-linked glycan (2 sites)"/>
</dbReference>
<dbReference type="iPTMnet" id="O95365"/>
<dbReference type="PhosphoSitePlus" id="O95365"/>
<dbReference type="SwissPalm" id="O95365"/>
<dbReference type="BioMuta" id="ZBTB7A"/>
<dbReference type="jPOST" id="O95365"/>
<dbReference type="MassIVE" id="O95365"/>
<dbReference type="PaxDb" id="9606-ENSP00000323670"/>
<dbReference type="PeptideAtlas" id="O95365"/>
<dbReference type="ProteomicsDB" id="50825"/>
<dbReference type="Pumba" id="O95365"/>
<dbReference type="Antibodypedia" id="11338">
    <property type="antibodies" value="348 antibodies from 39 providers"/>
</dbReference>
<dbReference type="DNASU" id="51341"/>
<dbReference type="Ensembl" id="ENST00000322357.9">
    <property type="protein sequence ID" value="ENSP00000323670.3"/>
    <property type="gene ID" value="ENSG00000178951.9"/>
</dbReference>
<dbReference type="Ensembl" id="ENST00000601588.1">
    <property type="protein sequence ID" value="ENSP00000471865.1"/>
    <property type="gene ID" value="ENSG00000178951.9"/>
</dbReference>
<dbReference type="GeneID" id="51341"/>
<dbReference type="KEGG" id="hsa:51341"/>
<dbReference type="MANE-Select" id="ENST00000322357.9">
    <property type="protein sequence ID" value="ENSP00000323670.3"/>
    <property type="RefSeq nucleotide sequence ID" value="NM_015898.4"/>
    <property type="RefSeq protein sequence ID" value="NP_056982.1"/>
</dbReference>
<dbReference type="UCSC" id="uc002lzh.4">
    <property type="organism name" value="human"/>
</dbReference>
<dbReference type="AGR" id="HGNC:18078"/>
<dbReference type="CTD" id="51341"/>
<dbReference type="DisGeNET" id="51341"/>
<dbReference type="GeneCards" id="ZBTB7A"/>
<dbReference type="HGNC" id="HGNC:18078">
    <property type="gene designation" value="ZBTB7A"/>
</dbReference>
<dbReference type="HPA" id="ENSG00000178951">
    <property type="expression patterns" value="Low tissue specificity"/>
</dbReference>
<dbReference type="MalaCards" id="ZBTB7A"/>
<dbReference type="MIM" id="605878">
    <property type="type" value="gene"/>
</dbReference>
<dbReference type="MIM" id="619769">
    <property type="type" value="phenotype"/>
</dbReference>
<dbReference type="neXtProt" id="NX_O95365"/>
<dbReference type="OpenTargets" id="ENSG00000178951"/>
<dbReference type="PharmGKB" id="PA134885165"/>
<dbReference type="VEuPathDB" id="HostDB:ENSG00000178951"/>
<dbReference type="eggNOG" id="KOG1721">
    <property type="taxonomic scope" value="Eukaryota"/>
</dbReference>
<dbReference type="GeneTree" id="ENSGT00940000162053"/>
<dbReference type="HOGENOM" id="CLU_025627_1_0_1"/>
<dbReference type="InParanoid" id="O95365"/>
<dbReference type="OMA" id="MRRCQDQ"/>
<dbReference type="OrthoDB" id="8922241at2759"/>
<dbReference type="PAN-GO" id="O95365">
    <property type="GO annotations" value="4 GO annotations based on evolutionary models"/>
</dbReference>
<dbReference type="PhylomeDB" id="O95365"/>
<dbReference type="TreeFam" id="TF331824"/>
<dbReference type="PathwayCommons" id="O95365"/>
<dbReference type="SignaLink" id="O95365"/>
<dbReference type="SIGNOR" id="O95365"/>
<dbReference type="BioGRID-ORCS" id="51341">
    <property type="hits" value="222 hits in 1236 CRISPR screens"/>
</dbReference>
<dbReference type="ChiTaRS" id="ZBTB7A">
    <property type="organism name" value="human"/>
</dbReference>
<dbReference type="EvolutionaryTrace" id="O95365"/>
<dbReference type="GeneWiki" id="ZBTB7A"/>
<dbReference type="GenomeRNAi" id="51341"/>
<dbReference type="Pharos" id="O95365">
    <property type="development level" value="Tbio"/>
</dbReference>
<dbReference type="PRO" id="PR:O95365"/>
<dbReference type="Proteomes" id="UP000005640">
    <property type="component" value="Chromosome 19"/>
</dbReference>
<dbReference type="RNAct" id="O95365">
    <property type="molecule type" value="protein"/>
</dbReference>
<dbReference type="Bgee" id="ENSG00000178951">
    <property type="expression patterns" value="Expressed in buccal mucosa cell and 202 other cell types or tissues"/>
</dbReference>
<dbReference type="GO" id="GO:0005737">
    <property type="term" value="C:cytoplasm"/>
    <property type="evidence" value="ECO:0000314"/>
    <property type="project" value="UniProtKB"/>
</dbReference>
<dbReference type="GO" id="GO:0070418">
    <property type="term" value="C:DNA-dependent protein kinase complex"/>
    <property type="evidence" value="ECO:0007669"/>
    <property type="project" value="Ensembl"/>
</dbReference>
<dbReference type="GO" id="GO:0005634">
    <property type="term" value="C:nucleus"/>
    <property type="evidence" value="ECO:0000314"/>
    <property type="project" value="UniProtKB"/>
</dbReference>
<dbReference type="GO" id="GO:0035861">
    <property type="term" value="C:site of double-strand break"/>
    <property type="evidence" value="ECO:0007669"/>
    <property type="project" value="Ensembl"/>
</dbReference>
<dbReference type="GO" id="GO:0003677">
    <property type="term" value="F:DNA binding"/>
    <property type="evidence" value="ECO:0000250"/>
    <property type="project" value="UniProtKB"/>
</dbReference>
<dbReference type="GO" id="GO:0003700">
    <property type="term" value="F:DNA-binding transcription factor activity"/>
    <property type="evidence" value="ECO:0000314"/>
    <property type="project" value="UniProtKB"/>
</dbReference>
<dbReference type="GO" id="GO:0000981">
    <property type="term" value="F:DNA-binding transcription factor activity, RNA polymerase II-specific"/>
    <property type="evidence" value="ECO:0000318"/>
    <property type="project" value="GO_Central"/>
</dbReference>
<dbReference type="GO" id="GO:0140297">
    <property type="term" value="F:DNA-binding transcription factor binding"/>
    <property type="evidence" value="ECO:0000353"/>
    <property type="project" value="UniProtKB"/>
</dbReference>
<dbReference type="GO" id="GO:0001227">
    <property type="term" value="F:DNA-binding transcription repressor activity, RNA polymerase II-specific"/>
    <property type="evidence" value="ECO:0007669"/>
    <property type="project" value="Ensembl"/>
</dbReference>
<dbReference type="GO" id="GO:0035035">
    <property type="term" value="F:histone acetyltransferase binding"/>
    <property type="evidence" value="ECO:0000250"/>
    <property type="project" value="UniProtKB"/>
</dbReference>
<dbReference type="GO" id="GO:0050681">
    <property type="term" value="F:nuclear androgen receptor binding"/>
    <property type="evidence" value="ECO:0000314"/>
    <property type="project" value="UniProtKB"/>
</dbReference>
<dbReference type="GO" id="GO:0000978">
    <property type="term" value="F:RNA polymerase II cis-regulatory region sequence-specific DNA binding"/>
    <property type="evidence" value="ECO:0000315"/>
    <property type="project" value="UniProtKB"/>
</dbReference>
<dbReference type="GO" id="GO:1990837">
    <property type="term" value="F:sequence-specific double-stranded DNA binding"/>
    <property type="evidence" value="ECO:0000314"/>
    <property type="project" value="ARUK-UCL"/>
</dbReference>
<dbReference type="GO" id="GO:0046332">
    <property type="term" value="F:SMAD binding"/>
    <property type="evidence" value="ECO:0000314"/>
    <property type="project" value="UniProtKB"/>
</dbReference>
<dbReference type="GO" id="GO:0001222">
    <property type="term" value="F:transcription corepressor binding"/>
    <property type="evidence" value="ECO:0000314"/>
    <property type="project" value="UniProtKB"/>
</dbReference>
<dbReference type="GO" id="GO:0008270">
    <property type="term" value="F:zinc ion binding"/>
    <property type="evidence" value="ECO:0007669"/>
    <property type="project" value="UniProtKB-KW"/>
</dbReference>
<dbReference type="GO" id="GO:0030183">
    <property type="term" value="P:B cell differentiation"/>
    <property type="evidence" value="ECO:0000250"/>
    <property type="project" value="UniProtKB"/>
</dbReference>
<dbReference type="GO" id="GO:0006325">
    <property type="term" value="P:chromatin organization"/>
    <property type="evidence" value="ECO:0000250"/>
    <property type="project" value="UniProtKB"/>
</dbReference>
<dbReference type="GO" id="GO:0006338">
    <property type="term" value="P:chromatin remodeling"/>
    <property type="evidence" value="ECO:0000315"/>
    <property type="project" value="UniProtKB"/>
</dbReference>
<dbReference type="GO" id="GO:0006351">
    <property type="term" value="P:DNA-templated transcription"/>
    <property type="evidence" value="ECO:0007669"/>
    <property type="project" value="Ensembl"/>
</dbReference>
<dbReference type="GO" id="GO:0097680">
    <property type="term" value="P:double-strand break repair via classical nonhomologous end joining"/>
    <property type="evidence" value="ECO:0000250"/>
    <property type="project" value="UniProtKB"/>
</dbReference>
<dbReference type="GO" id="GO:0043249">
    <property type="term" value="P:erythrocyte maturation"/>
    <property type="evidence" value="ECO:0000315"/>
    <property type="project" value="UniProtKB"/>
</dbReference>
<dbReference type="GO" id="GO:0045444">
    <property type="term" value="P:fat cell differentiation"/>
    <property type="evidence" value="ECO:0000315"/>
    <property type="project" value="UniProtKB"/>
</dbReference>
<dbReference type="GO" id="GO:0060766">
    <property type="term" value="P:negative regulation of androgen receptor signaling pathway"/>
    <property type="evidence" value="ECO:0000315"/>
    <property type="project" value="UniProtKB"/>
</dbReference>
<dbReference type="GO" id="GO:0045892">
    <property type="term" value="P:negative regulation of DNA-templated transcription"/>
    <property type="evidence" value="ECO:0000314"/>
    <property type="project" value="UniProtKB"/>
</dbReference>
<dbReference type="GO" id="GO:0045746">
    <property type="term" value="P:negative regulation of Notch signaling pathway"/>
    <property type="evidence" value="ECO:0000250"/>
    <property type="project" value="UniProtKB"/>
</dbReference>
<dbReference type="GO" id="GO:0000122">
    <property type="term" value="P:negative regulation of transcription by RNA polymerase II"/>
    <property type="evidence" value="ECO:0000315"/>
    <property type="project" value="UniProtKB"/>
</dbReference>
<dbReference type="GO" id="GO:0030512">
    <property type="term" value="P:negative regulation of transforming growth factor beta receptor signaling pathway"/>
    <property type="evidence" value="ECO:0000315"/>
    <property type="project" value="UniProtKB"/>
</dbReference>
<dbReference type="GO" id="GO:0051092">
    <property type="term" value="P:positive regulation of NF-kappaB transcription factor activity"/>
    <property type="evidence" value="ECO:0000314"/>
    <property type="project" value="UniProtKB"/>
</dbReference>
<dbReference type="GO" id="GO:0034504">
    <property type="term" value="P:protein localization to nucleus"/>
    <property type="evidence" value="ECO:0000315"/>
    <property type="project" value="UniProtKB"/>
</dbReference>
<dbReference type="GO" id="GO:0000381">
    <property type="term" value="P:regulation of alternative mRNA splicing, via spliceosome"/>
    <property type="evidence" value="ECO:0000314"/>
    <property type="project" value="UniProtKB"/>
</dbReference>
<dbReference type="GO" id="GO:0042981">
    <property type="term" value="P:regulation of apoptotic process"/>
    <property type="evidence" value="ECO:0000315"/>
    <property type="project" value="UniProtKB"/>
</dbReference>
<dbReference type="GO" id="GO:0051090">
    <property type="term" value="P:regulation of DNA-binding transcription factor activity"/>
    <property type="evidence" value="ECO:0000250"/>
    <property type="project" value="UniProtKB"/>
</dbReference>
<dbReference type="GO" id="GO:0006110">
    <property type="term" value="P:regulation of glycolytic process"/>
    <property type="evidence" value="ECO:0000315"/>
    <property type="project" value="UniProtKB"/>
</dbReference>
<dbReference type="GO" id="GO:0006357">
    <property type="term" value="P:regulation of transcription by RNA polymerase II"/>
    <property type="evidence" value="ECO:0000314"/>
    <property type="project" value="GO_Central"/>
</dbReference>
<dbReference type="GO" id="GO:2000677">
    <property type="term" value="P:regulation of transcription regulatory region DNA binding"/>
    <property type="evidence" value="ECO:0000314"/>
    <property type="project" value="UniProtKB"/>
</dbReference>
<dbReference type="CDD" id="cd18326">
    <property type="entry name" value="BTB_POZ_ZBTB7A"/>
    <property type="match status" value="1"/>
</dbReference>
<dbReference type="FunFam" id="3.30.710.10:FF:000043">
    <property type="entry name" value="Zinc finger and BTB domain containing 7A"/>
    <property type="match status" value="1"/>
</dbReference>
<dbReference type="FunFam" id="3.30.160.60:FF:001448">
    <property type="entry name" value="Zinc finger and BTB domain containing 7a"/>
    <property type="match status" value="1"/>
</dbReference>
<dbReference type="FunFam" id="3.30.160.60:FF:000115">
    <property type="entry name" value="Zinc finger and BTB domain containing 7C"/>
    <property type="match status" value="1"/>
</dbReference>
<dbReference type="FunFam" id="3.30.160.60:FF:000138">
    <property type="entry name" value="Zinc finger and BTB domain containing 7C"/>
    <property type="match status" value="1"/>
</dbReference>
<dbReference type="FunFam" id="3.30.160.60:FF:003388">
    <property type="entry name" value="Zinc finger and BTB domain-containing protein 7A"/>
    <property type="match status" value="1"/>
</dbReference>
<dbReference type="Gene3D" id="3.30.160.60">
    <property type="entry name" value="Classic Zinc Finger"/>
    <property type="match status" value="4"/>
</dbReference>
<dbReference type="Gene3D" id="3.30.710.10">
    <property type="entry name" value="Potassium Channel Kv1.1, Chain A"/>
    <property type="match status" value="1"/>
</dbReference>
<dbReference type="InterPro" id="IPR000210">
    <property type="entry name" value="BTB/POZ_dom"/>
</dbReference>
<dbReference type="InterPro" id="IPR011333">
    <property type="entry name" value="SKP1/BTB/POZ_sf"/>
</dbReference>
<dbReference type="InterPro" id="IPR036236">
    <property type="entry name" value="Znf_C2H2_sf"/>
</dbReference>
<dbReference type="InterPro" id="IPR013087">
    <property type="entry name" value="Znf_C2H2_type"/>
</dbReference>
<dbReference type="InterPro" id="IPR050457">
    <property type="entry name" value="ZnFinger_BTB_dom_contain"/>
</dbReference>
<dbReference type="PANTHER" id="PTHR46105">
    <property type="entry name" value="AGAP004733-PA"/>
    <property type="match status" value="1"/>
</dbReference>
<dbReference type="PANTHER" id="PTHR46105:SF6">
    <property type="entry name" value="ZINC FINGER AND BTB DOMAIN-CONTAINING PROTEIN 7A"/>
    <property type="match status" value="1"/>
</dbReference>
<dbReference type="Pfam" id="PF00651">
    <property type="entry name" value="BTB"/>
    <property type="match status" value="1"/>
</dbReference>
<dbReference type="Pfam" id="PF00096">
    <property type="entry name" value="zf-C2H2"/>
    <property type="match status" value="2"/>
</dbReference>
<dbReference type="SMART" id="SM00225">
    <property type="entry name" value="BTB"/>
    <property type="match status" value="1"/>
</dbReference>
<dbReference type="SMART" id="SM00355">
    <property type="entry name" value="ZnF_C2H2"/>
    <property type="match status" value="4"/>
</dbReference>
<dbReference type="SUPFAM" id="SSF57667">
    <property type="entry name" value="beta-beta-alpha zinc fingers"/>
    <property type="match status" value="2"/>
</dbReference>
<dbReference type="SUPFAM" id="SSF54695">
    <property type="entry name" value="POZ domain"/>
    <property type="match status" value="1"/>
</dbReference>
<dbReference type="PROSITE" id="PS50097">
    <property type="entry name" value="BTB"/>
    <property type="match status" value="1"/>
</dbReference>
<dbReference type="PROSITE" id="PS00028">
    <property type="entry name" value="ZINC_FINGER_C2H2_1"/>
    <property type="match status" value="3"/>
</dbReference>
<dbReference type="PROSITE" id="PS50157">
    <property type="entry name" value="ZINC_FINGER_C2H2_2"/>
    <property type="match status" value="4"/>
</dbReference>
<gene>
    <name evidence="27" type="primary">ZBTB7A</name>
    <name type="synonym">FBI1</name>
    <name evidence="23" type="synonym">LRF</name>
    <name evidence="27" type="synonym">ZBTB7</name>
    <name type="synonym">ZNF857A</name>
</gene>
<keyword id="KW-0002">3D-structure</keyword>
<keyword id="KW-0217">Developmental protein</keyword>
<keyword id="KW-0221">Differentiation</keyword>
<keyword id="KW-0225">Disease variant</keyword>
<keyword id="KW-0238">DNA-binding</keyword>
<keyword id="KW-0991">Intellectual disability</keyword>
<keyword id="KW-1017">Isopeptide bond</keyword>
<keyword id="KW-0479">Metal-binding</keyword>
<keyword id="KW-0539">Nucleus</keyword>
<keyword id="KW-0597">Phosphoprotein</keyword>
<keyword id="KW-1267">Proteomics identification</keyword>
<keyword id="KW-1185">Reference proteome</keyword>
<keyword id="KW-0677">Repeat</keyword>
<keyword id="KW-0678">Repressor</keyword>
<keyword id="KW-0804">Transcription</keyword>
<keyword id="KW-0805">Transcription regulation</keyword>
<keyword id="KW-0832">Ubl conjugation</keyword>
<keyword id="KW-0862">Zinc</keyword>
<keyword id="KW-0863">Zinc-finger</keyword>
<evidence type="ECO:0000250" key="1">
    <source>
        <dbReference type="UniProtKB" id="O88939"/>
    </source>
</evidence>
<evidence type="ECO:0000250" key="2">
    <source>
        <dbReference type="UniProtKB" id="Q9QZ48"/>
    </source>
</evidence>
<evidence type="ECO:0000255" key="3">
    <source>
        <dbReference type="PROSITE-ProRule" id="PRU00037"/>
    </source>
</evidence>
<evidence type="ECO:0000255" key="4">
    <source>
        <dbReference type="PROSITE-ProRule" id="PRU00042"/>
    </source>
</evidence>
<evidence type="ECO:0000256" key="5">
    <source>
        <dbReference type="SAM" id="MobiDB-lite"/>
    </source>
</evidence>
<evidence type="ECO:0000269" key="6">
    <source>
    </source>
</evidence>
<evidence type="ECO:0000269" key="7">
    <source>
    </source>
</evidence>
<evidence type="ECO:0000269" key="8">
    <source>
    </source>
</evidence>
<evidence type="ECO:0000269" key="9">
    <source>
    </source>
</evidence>
<evidence type="ECO:0000269" key="10">
    <source>
    </source>
</evidence>
<evidence type="ECO:0000269" key="11">
    <source>
    </source>
</evidence>
<evidence type="ECO:0000269" key="12">
    <source>
    </source>
</evidence>
<evidence type="ECO:0000269" key="13">
    <source>
    </source>
</evidence>
<evidence type="ECO:0000269" key="14">
    <source>
    </source>
</evidence>
<evidence type="ECO:0000269" key="15">
    <source>
    </source>
</evidence>
<evidence type="ECO:0000269" key="16">
    <source>
    </source>
</evidence>
<evidence type="ECO:0000269" key="17">
    <source>
    </source>
</evidence>
<evidence type="ECO:0000269" key="18">
    <source>
    </source>
</evidence>
<evidence type="ECO:0000269" key="19">
    <source>
    </source>
</evidence>
<evidence type="ECO:0000269" key="20">
    <source>
    </source>
</evidence>
<evidence type="ECO:0000303" key="21">
    <source>
    </source>
</evidence>
<evidence type="ECO:0000303" key="22">
    <source>
    </source>
</evidence>
<evidence type="ECO:0000303" key="23">
    <source>
    </source>
</evidence>
<evidence type="ECO:0000303" key="24">
    <source>
    </source>
</evidence>
<evidence type="ECO:0000305" key="25"/>
<evidence type="ECO:0000312" key="26">
    <source>
        <dbReference type="EMBL" id="AAB58414.1"/>
    </source>
</evidence>
<evidence type="ECO:0000312" key="27">
    <source>
        <dbReference type="HGNC" id="HGNC:18078"/>
    </source>
</evidence>
<evidence type="ECO:0007744" key="28">
    <source>
    </source>
</evidence>
<evidence type="ECO:0007744" key="29">
    <source>
    </source>
</evidence>
<evidence type="ECO:0007744" key="30">
    <source>
    </source>
</evidence>
<evidence type="ECO:0007744" key="31">
    <source>
    </source>
</evidence>
<evidence type="ECO:0007744" key="32">
    <source>
    </source>
</evidence>
<evidence type="ECO:0007744" key="33">
    <source>
    </source>
</evidence>
<evidence type="ECO:0007744" key="34">
    <source>
    </source>
</evidence>
<evidence type="ECO:0007744" key="35">
    <source>
    </source>
</evidence>
<evidence type="ECO:0007744" key="36">
    <source>
    </source>
</evidence>
<evidence type="ECO:0007829" key="37">
    <source>
        <dbReference type="PDB" id="2IF5"/>
    </source>
</evidence>
<evidence type="ECO:0007829" key="38">
    <source>
        <dbReference type="PDB" id="2NN2"/>
    </source>
</evidence>
<evidence type="ECO:0007829" key="39">
    <source>
        <dbReference type="PDB" id="7EYI"/>
    </source>
</evidence>
<evidence type="ECO:0007829" key="40">
    <source>
        <dbReference type="PDB" id="7N5S"/>
    </source>
</evidence>
<evidence type="ECO:0007829" key="41">
    <source>
        <dbReference type="PDB" id="7N5V"/>
    </source>
</evidence>
<evidence type="ECO:0007829" key="42">
    <source>
        <dbReference type="PDB" id="7N5W"/>
    </source>
</evidence>
<evidence type="ECO:0007829" key="43">
    <source>
        <dbReference type="PDB" id="8H9H"/>
    </source>
</evidence>
<organism>
    <name type="scientific">Homo sapiens</name>
    <name type="common">Human</name>
    <dbReference type="NCBI Taxonomy" id="9606"/>
    <lineage>
        <taxon>Eukaryota</taxon>
        <taxon>Metazoa</taxon>
        <taxon>Chordata</taxon>
        <taxon>Craniata</taxon>
        <taxon>Vertebrata</taxon>
        <taxon>Euteleostomi</taxon>
        <taxon>Mammalia</taxon>
        <taxon>Eutheria</taxon>
        <taxon>Euarchontoglires</taxon>
        <taxon>Primates</taxon>
        <taxon>Haplorrhini</taxon>
        <taxon>Catarrhini</taxon>
        <taxon>Hominidae</taxon>
        <taxon>Homo</taxon>
    </lineage>
</organism>
<sequence>MAGGVDGPIGIPFPDHSSDILSGLNEQRTQGLLCDVVILVEGREFPTHRSVLAACSQYFKKLFTSGAVVDQQNVYEIDFVSAEALTALMDFAYTATLTVSTANVGDILSAARLLEIPAVSHVCADLLDRQILAADAGADAGQLDLVDQIDQRNLLRAKEYLEFFQSNPMNSLPPAAAAAAASFPWSAFGASDDDLDATKEAVAAAVAAVAAGDCNGLDFYGPGPPAERPPTGDGDEGDSNPGLWPERDEDAPTGGLFPPPVAPPAATQNGHYGRGGEEEAASLSEAAPEPGDSPGFLSGAAEGEDGDGPDVDGLAASTLLQQMMSSVGRAGAAAGDSDEESRADDKGVMDYYLKYFSGAHDGDVYPAWSQKVEKKIRAKAFQKCPICEKVIQGAGKLPRHIRTHTGEKPYECNICKVRFTRQDKLKVHMRKHTGEKPYLCQQCGAAFAHNYDLKNHMRVHTGLRPYQCDSCCKTFVRSDHLHRHLKKDGCNGVPSRRGRKPRVRGGAPDPSPGATATPGAPAQPSSPDARRNGQEKHFKDEDEDEDVASPDGLGRLNVAGAGGGGDSGGGPGAATDGNFTAGLA</sequence>
<comment type="function">
    <text evidence="1 2 6 7 9 10 11 12 14 15">Transcription factor that represses the transcription of a wide range of genes involved in cell proliferation and differentiation (PubMed:14701838, PubMed:17595526, PubMed:20812024, PubMed:25514493, PubMed:26455326, PubMed:26816381). Directly and specifically binds to the consensus sequence 5'-[GA][CA]GACCCCCCCCC-3' and represses transcription both by regulating the organization of chromatin and through the direct recruitment of transcription factors to gene regulatory regions (PubMed:12004059, PubMed:17595526, PubMed:20812024, PubMed:25514493, PubMed:26816381). Negatively regulates SMAD4 transcriptional activity in the TGF-beta signaling pathway through these two mechanisms (PubMed:25514493). That is, recruits the chromatin regulator HDAC1 to the SMAD4-DNA complex and in parallel prevents the recruitment of the transcriptional activators CREBBP and EP300 (PubMed:25514493). Collaborates with transcription factors like RELA to modify the accessibility of gene transcription regulatory regions to secondary transcription factors (By similarity). Also directly interacts with transcription factors like SP1 to prevent their binding to DNA (PubMed:12004059). Functions as an androgen receptor/AR transcriptional corepressor by recruiting NCOR1 and NCOR2 to the androgen response elements/ARE on target genes (PubMed:20812024). Thereby, negatively regulates androgen receptor signaling and androgen-induced cell proliferation (PubMed:20812024). Involved in the switch between fetal and adult globin expression during erythroid cells maturation (PubMed:26816381). Through its interaction with the NuRD complex regulates chromatin at the fetal globin genes to repress their transcription (PubMed:26816381). Specifically represses the transcription of the tumor suppressor ARF isoform from the CDKN2A gene (By similarity). Efficiently abrogates E2F1-dependent CDKN2A transactivation (By similarity). Regulates chondrogenesis through the transcriptional repression of specific genes via a mechanism that also requires histone deacetylation (By similarity). Regulates cell proliferation through the transcriptional regulation of genes involved in glycolysis (PubMed:26455326). Involved in adipogenesis through the regulation of genes involved in adipocyte differentiation (PubMed:14701838). Plays a key role in the differentiation of lymphoid progenitors into B and T lineages (By similarity). Promotes differentiation towards the B lineage by inhibiting the T-cell instructive Notch signaling pathway through the specific transcriptional repression of Notch downstream target genes (By similarity). Also regulates osteoclast differentiation (By similarity). May also play a role, independently of its transcriptional activity, in double-strand break repair via classical non-homologous end joining/cNHEJ (By similarity). Recruited to double-strand break sites on damage DNA, interacts with the DNA-dependent protein kinase complex and directly regulates its stability and activity in DNA repair (By similarity). May also modulate the splicing activity of KHDRBS1 toward BCL2L1 in a mechanism which is histone deacetylase-dependent and thereby negatively regulates the pro-apoptotic effect of KHDRBS1 (PubMed:24514149).</text>
</comment>
<comment type="subunit">
    <text evidence="1 6 10 11 12 13 16 20">Homodimer (PubMed:9973611). Interacts with BCL6 (By similarity). Interacts with RELA; involved in the control by RELA of the accessibility of target gene promoters (PubMed:29813070). Interacts with AR (via NR LBD domain); the interaction is direct and androgen-dependent (PubMed:20812024). Interacts with NCOR1 (PubMed:20812024). Interacts with NCOR2 (PubMed:20812024). Interacts with SMAD4; the interaction is direct and stimulated by TGFB1 (PubMed:25514493). Interacts with HDAC1 (PubMed:25514493). Interacts with SP1; ZBTB7A prevents the binding to GC-rich motifs in promoters and represses the transcriptional activity of SP1 (PubMed:12004059). Interacts with the DNA-dependent protein kinase complex/DNA-PKc (PubMed:26446488). Interacts with KHDRBS1; negatively regulates KHDRBS1 splicing activity (PubMed:24514149).</text>
</comment>
<comment type="interaction">
    <interactant intactId="EBI-2795384">
        <id>O95365</id>
    </interactant>
    <interactant intactId="EBI-927511">
        <id>Q9NRL2</id>
        <label>BAZ1A</label>
    </interactant>
    <organismsDiffer>false</organismsDiffer>
    <experiments>2</experiments>
</comment>
<comment type="interaction">
    <interactant intactId="EBI-2795384">
        <id>O95365</id>
    </interactant>
    <interactant intactId="EBI-523590">
        <id>Q12873</id>
        <label>CHD3</label>
    </interactant>
    <organismsDiffer>false</organismsDiffer>
    <experiments>2</experiments>
</comment>
<comment type="interaction">
    <interactant intactId="EBI-2795384">
        <id>O95365</id>
    </interactant>
    <interactant intactId="EBI-1169146">
        <id>Q9HCK8</id>
        <label>CHD8</label>
    </interactant>
    <organismsDiffer>false</organismsDiffer>
    <experiments>2</experiments>
</comment>
<comment type="interaction">
    <interactant intactId="EBI-2795384">
        <id>O95365</id>
    </interactant>
    <interactant intactId="EBI-923440">
        <id>Q8WXI9</id>
        <label>GATAD2B</label>
    </interactant>
    <organismsDiffer>false</organismsDiffer>
    <experiments>4</experiments>
</comment>
<comment type="interaction">
    <interactant intactId="EBI-2795384">
        <id>O95365</id>
    </interactant>
    <interactant intactId="EBI-301834">
        <id>Q13547</id>
        <label>HDAC1</label>
    </interactant>
    <organismsDiffer>false</organismsDiffer>
    <experiments>2</experiments>
</comment>
<comment type="interaction">
    <interactant intactId="EBI-2795384">
        <id>O95365</id>
    </interactant>
    <interactant intactId="EBI-10172004">
        <id>Q8IX15-3</id>
        <label>HOMEZ</label>
    </interactant>
    <organismsDiffer>false</organismsDiffer>
    <experiments>3</experiments>
</comment>
<comment type="interaction">
    <interactant intactId="EBI-2795384">
        <id>O95365</id>
    </interactant>
    <interactant intactId="EBI-1364">
        <id>Q07666</id>
        <label>KHDRBS1</label>
    </interactant>
    <organismsDiffer>false</organismsDiffer>
    <experiments>9</experiments>
</comment>
<comment type="subcellular location">
    <subcellularLocation>
        <location evidence="9 11">Nucleus</location>
    </subcellularLocation>
    <text evidence="1">Recruited to double-strand break sites of damaged DNA.</text>
</comment>
<comment type="tissue specificity">
    <text evidence="7 8 19">Widely expressed (PubMed:9927193). In normal thymus, expressed in medullary epithelial cells and Hassle's corpuscles (at protein level) (PubMed:15662416). In tonsil, expressed in squamous epithelium and germinal center lymphocytes (at protein level) (PubMed:15662416). Up-regulated in a subset of lymphomas, as well as in a subset of breast, lung, colon, prostate and bladder carcinomas (at protein level) (PubMed:15662416). Expressed in adipose tissues (PubMed:14701838).</text>
</comment>
<comment type="developmental stage">
    <text evidence="7 15">Expression is increased in differentiating erythroid cells (at protein level) (PubMed:26816381). Up-regulated during adipocyte differentiation (PubMed:14701838).</text>
</comment>
<comment type="domain">
    <text evidence="6 10 12">The BTB domain mediates the interaction with the androgen receptor/AR and HDAC1 (PubMed:20812024, PubMed:25514493). Also mediates the interaction with SP1 (PubMed:12004059).</text>
</comment>
<comment type="PTM">
    <text evidence="9">Sumoylated. Undergoes sumoylation with SUMO1 that may regulate its transcriptional activity.</text>
</comment>
<comment type="disease" evidence="17 18">
    <disease id="DI-06356">
        <name>Macrocephaly, neurodevelopmental delay, lymphoid hyperplasia, and persistent fetal hemoglobin</name>
        <acronym>MNDLFH</acronym>
        <description>An autosomal dominant disease characterized by pharyngeal lymphoid hypertrophy, with adenoid overgrowth, sleep apnea, macrocephaly without structural brain abnormalities, and impaired intellectual development. An increased fraction of fetal hemoglobin has been observed in some patients.</description>
        <dbReference type="MIM" id="619769"/>
    </disease>
    <text>The disease is caused by variants affecting the gene represented in this entry.</text>
</comment>
<comment type="sequence caution" evidence="25">
    <conflict type="frameshift">
        <sequence resource="EMBL-CDS" id="AAB58414"/>
    </conflict>
</comment>
<comment type="online information" name="Atlas of Genetics and Cytogenetics in Oncology and Haematology">
    <link uri="https://atlasgeneticsoncology.org/gene/42863/ZBTB7A"/>
</comment>
<protein>
    <recommendedName>
        <fullName evidence="25">Zinc finger and BTB domain-containing protein 7A</fullName>
    </recommendedName>
    <alternativeName>
        <fullName evidence="24">Factor binding IST protein 1</fullName>
        <shortName evidence="24">FBI-1</shortName>
    </alternativeName>
    <alternativeName>
        <fullName>Factor that binds to inducer of short transcripts protein 1</fullName>
    </alternativeName>
    <alternativeName>
        <fullName>HIV-1 1st-binding protein 1</fullName>
    </alternativeName>
    <alternativeName>
        <fullName evidence="23">Leukemia/lymphoma-related factor</fullName>
    </alternativeName>
    <alternativeName>
        <fullName evidence="21">POZ and Krueppel erythroid myeloid ontogenic factor</fullName>
        <shortName evidence="21">POK erythroid myeloid ontogenic factor</shortName>
        <shortName evidence="21">Pokemon</shortName>
        <shortName evidence="22">Pokemon 1</shortName>
    </alternativeName>
    <alternativeName>
        <fullName evidence="26">TTF-I-interacting peptide 21</fullName>
        <shortName evidence="26">TIP21</shortName>
    </alternativeName>
    <alternativeName>
        <fullName>Zinc finger protein 857A</fullName>
    </alternativeName>
</protein>